<reference key="1">
    <citation type="submission" date="2006-01" db="EMBL/GenBank/DDBJ databases">
        <title>NISC comparative sequencing initiative.</title>
        <authorList>
            <person name="Antonellis A."/>
            <person name="Ayele K."/>
            <person name="Benjamin B."/>
            <person name="Blakesley R.W."/>
            <person name="Boakye A."/>
            <person name="Bouffard G.G."/>
            <person name="Brinkley C."/>
            <person name="Brooks S."/>
            <person name="Chu G."/>
            <person name="Coleman H."/>
            <person name="Engle J."/>
            <person name="Gestole M."/>
            <person name="Greene A."/>
            <person name="Guan X."/>
            <person name="Gupta J."/>
            <person name="Haghighi P."/>
            <person name="Han J."/>
            <person name="Hansen N."/>
            <person name="Ho S.-L."/>
            <person name="Hu P."/>
            <person name="Hunter G."/>
            <person name="Hurle B."/>
            <person name="Idol J.R."/>
            <person name="Kwong P."/>
            <person name="Laric P."/>
            <person name="Larson S."/>
            <person name="Lee-Lin S.-Q."/>
            <person name="Legaspi R."/>
            <person name="Madden M."/>
            <person name="Maduro Q.L."/>
            <person name="Maduro V.B."/>
            <person name="Margulies E.H."/>
            <person name="Masiello C."/>
            <person name="Maskeri B."/>
            <person name="McDowell J."/>
            <person name="Mojidi H.A."/>
            <person name="Mullikin J.C."/>
            <person name="Oestreicher J.S."/>
            <person name="Park M."/>
            <person name="Portnoy M.E."/>
            <person name="Prasad A."/>
            <person name="Puri O."/>
            <person name="Reddix-Dugue N."/>
            <person name="Schandler K."/>
            <person name="Schueler M.G."/>
            <person name="Sison C."/>
            <person name="Stantripop S."/>
            <person name="Stephen E."/>
            <person name="Taye A."/>
            <person name="Thomas J.W."/>
            <person name="Thomas P.J."/>
            <person name="Tsipouri V."/>
            <person name="Ung L."/>
            <person name="Vogt J.L."/>
            <person name="Wetherby K.D."/>
            <person name="Young A."/>
            <person name="Green E.D."/>
        </authorList>
    </citation>
    <scope>NUCLEOTIDE SEQUENCE [LARGE SCALE GENOMIC DNA]</scope>
</reference>
<keyword id="KW-0965">Cell junction</keyword>
<keyword id="KW-0963">Cytoplasm</keyword>
<keyword id="KW-0440">LIM domain</keyword>
<keyword id="KW-0479">Metal-binding</keyword>
<keyword id="KW-0677">Repeat</keyword>
<keyword id="KW-0862">Zinc</keyword>
<accession>Q2IBA3</accession>
<name>TES_CHLAE</name>
<gene>
    <name type="primary">TES</name>
</gene>
<organism>
    <name type="scientific">Chlorocebus aethiops</name>
    <name type="common">Green monkey</name>
    <name type="synonym">Cercopithecus aethiops</name>
    <dbReference type="NCBI Taxonomy" id="9534"/>
    <lineage>
        <taxon>Eukaryota</taxon>
        <taxon>Metazoa</taxon>
        <taxon>Chordata</taxon>
        <taxon>Craniata</taxon>
        <taxon>Vertebrata</taxon>
        <taxon>Euteleostomi</taxon>
        <taxon>Mammalia</taxon>
        <taxon>Eutheria</taxon>
        <taxon>Euarchontoglires</taxon>
        <taxon>Primates</taxon>
        <taxon>Haplorrhini</taxon>
        <taxon>Catarrhini</taxon>
        <taxon>Cercopithecidae</taxon>
        <taxon>Cercopithecinae</taxon>
        <taxon>Chlorocebus</taxon>
    </lineage>
</organism>
<evidence type="ECO:0000250" key="1"/>
<evidence type="ECO:0000255" key="2">
    <source>
        <dbReference type="PROSITE-ProRule" id="PRU00125"/>
    </source>
</evidence>
<evidence type="ECO:0000255" key="3">
    <source>
        <dbReference type="PROSITE-ProRule" id="PRU00636"/>
    </source>
</evidence>
<evidence type="ECO:0000256" key="4">
    <source>
        <dbReference type="SAM" id="MobiDB-lite"/>
    </source>
</evidence>
<evidence type="ECO:0000305" key="5"/>
<proteinExistence type="inferred from homology"/>
<feature type="chain" id="PRO_0000251900" description="Testin">
    <location>
        <begin position="1"/>
        <end position="421"/>
    </location>
</feature>
<feature type="domain" description="PET" evidence="3">
    <location>
        <begin position="92"/>
        <end position="199"/>
    </location>
</feature>
<feature type="domain" description="LIM zinc-binding 1" evidence="2">
    <location>
        <begin position="234"/>
        <end position="297"/>
    </location>
</feature>
<feature type="domain" description="LIM zinc-binding 2" evidence="2">
    <location>
        <begin position="299"/>
        <end position="359"/>
    </location>
</feature>
<feature type="domain" description="LIM zinc-binding 3" evidence="2">
    <location>
        <begin position="362"/>
        <end position="421"/>
    </location>
</feature>
<feature type="region of interest" description="Disordered" evidence="4">
    <location>
        <begin position="133"/>
        <end position="164"/>
    </location>
</feature>
<feature type="compositionally biased region" description="Basic and acidic residues" evidence="4">
    <location>
        <begin position="155"/>
        <end position="164"/>
    </location>
</feature>
<dbReference type="EMBL" id="DP000029">
    <property type="protein sequence ID" value="ABC87482.1"/>
    <property type="molecule type" value="Genomic_DNA"/>
</dbReference>
<dbReference type="SMR" id="Q2IBA3"/>
<dbReference type="GO" id="GO:0005737">
    <property type="term" value="C:cytoplasm"/>
    <property type="evidence" value="ECO:0000250"/>
    <property type="project" value="UniProtKB"/>
</dbReference>
<dbReference type="GO" id="GO:0005925">
    <property type="term" value="C:focal adhesion"/>
    <property type="evidence" value="ECO:0007669"/>
    <property type="project" value="UniProtKB-SubCell"/>
</dbReference>
<dbReference type="GO" id="GO:0008270">
    <property type="term" value="F:zinc ion binding"/>
    <property type="evidence" value="ECO:0000250"/>
    <property type="project" value="UniProtKB"/>
</dbReference>
<dbReference type="GO" id="GO:0008285">
    <property type="term" value="P:negative regulation of cell population proliferation"/>
    <property type="evidence" value="ECO:0000250"/>
    <property type="project" value="UniProtKB"/>
</dbReference>
<dbReference type="CDD" id="cd09413">
    <property type="entry name" value="LIM1_Testin"/>
    <property type="match status" value="1"/>
</dbReference>
<dbReference type="CDD" id="cd09416">
    <property type="entry name" value="LIM2_Testin"/>
    <property type="match status" value="1"/>
</dbReference>
<dbReference type="CDD" id="cd09419">
    <property type="entry name" value="LIM3_Testin"/>
    <property type="match status" value="1"/>
</dbReference>
<dbReference type="CDD" id="cd09829">
    <property type="entry name" value="PET_testin"/>
    <property type="match status" value="1"/>
</dbReference>
<dbReference type="FunFam" id="2.10.110.10:FF:000061">
    <property type="entry name" value="Testin"/>
    <property type="match status" value="1"/>
</dbReference>
<dbReference type="FunFam" id="2.10.110.10:FF:000065">
    <property type="entry name" value="Testin"/>
    <property type="match status" value="1"/>
</dbReference>
<dbReference type="FunFam" id="2.10.110.10:FF:000005">
    <property type="entry name" value="Testin isoform 1"/>
    <property type="match status" value="1"/>
</dbReference>
<dbReference type="Gene3D" id="2.10.110.10">
    <property type="entry name" value="Cysteine Rich Protein"/>
    <property type="match status" value="3"/>
</dbReference>
<dbReference type="InterPro" id="IPR034958">
    <property type="entry name" value="LIM1_Testin"/>
</dbReference>
<dbReference type="InterPro" id="IPR034959">
    <property type="entry name" value="LIM2_Testin"/>
</dbReference>
<dbReference type="InterPro" id="IPR034960">
    <property type="entry name" value="LIM3_Testin"/>
</dbReference>
<dbReference type="InterPro" id="IPR010442">
    <property type="entry name" value="PET_domain"/>
</dbReference>
<dbReference type="InterPro" id="IPR033724">
    <property type="entry name" value="PET_testin"/>
</dbReference>
<dbReference type="InterPro" id="IPR047120">
    <property type="entry name" value="Pk/Esn/Tes"/>
</dbReference>
<dbReference type="InterPro" id="IPR001781">
    <property type="entry name" value="Znf_LIM"/>
</dbReference>
<dbReference type="PANTHER" id="PTHR24211">
    <property type="entry name" value="LIM DOMAIN-CONTAINING PROTEIN"/>
    <property type="match status" value="1"/>
</dbReference>
<dbReference type="PANTHER" id="PTHR24211:SF1">
    <property type="entry name" value="TESTIN"/>
    <property type="match status" value="1"/>
</dbReference>
<dbReference type="Pfam" id="PF00412">
    <property type="entry name" value="LIM"/>
    <property type="match status" value="3"/>
</dbReference>
<dbReference type="Pfam" id="PF06297">
    <property type="entry name" value="PET"/>
    <property type="match status" value="1"/>
</dbReference>
<dbReference type="SMART" id="SM00132">
    <property type="entry name" value="LIM"/>
    <property type="match status" value="3"/>
</dbReference>
<dbReference type="SUPFAM" id="SSF57716">
    <property type="entry name" value="Glucocorticoid receptor-like (DNA-binding domain)"/>
    <property type="match status" value="2"/>
</dbReference>
<dbReference type="PROSITE" id="PS00478">
    <property type="entry name" value="LIM_DOMAIN_1"/>
    <property type="match status" value="2"/>
</dbReference>
<dbReference type="PROSITE" id="PS50023">
    <property type="entry name" value="LIM_DOMAIN_2"/>
    <property type="match status" value="3"/>
</dbReference>
<dbReference type="PROSITE" id="PS51303">
    <property type="entry name" value="PET"/>
    <property type="match status" value="1"/>
</dbReference>
<comment type="function">
    <text evidence="1">Scaffold protein that may play a role in cell adhesion, cell spreading and in the reorganization of the actin cytoskeleton. Plays a role in the regulation of cell proliferation. May act as a tumor suppressor (By similarity).</text>
</comment>
<comment type="subunit">
    <text evidence="1">Interacts via LIM domain 1 with ZYX. Interacts (via LIM domain 3) with ENAH and VASP. Interacts with ALKBH4, talin, actin, alpha-actinin, GRIP1 and PXN (By similarity). Interacts (via LIM domain 2) with ACTL7A (via N-terminus). Heterodimer with ACTL7A; the heterodimer interacts with ENAH to form a heterotrimer (By similarity).</text>
</comment>
<comment type="subcellular location">
    <subcellularLocation>
        <location evidence="1">Cytoplasm</location>
    </subcellularLocation>
    <subcellularLocation>
        <location evidence="1">Cell junction</location>
        <location evidence="1">Focal adhesion</location>
    </subcellularLocation>
    <text evidence="1">Detected along actin stress fibers.</text>
</comment>
<comment type="domain">
    <text evidence="1">The N-terminal and the C-terminal halves of the protein can associate with each other, thereby hindering interactions with ZYX.</text>
</comment>
<comment type="similarity">
    <text evidence="5">Belongs to the prickle / espinas / testin family.</text>
</comment>
<protein>
    <recommendedName>
        <fullName>Testin</fullName>
    </recommendedName>
</protein>
<sequence>MDLENKVKKMGLGHEQGFGAPCLKCKEKCEGFELHFWRKICRNCKCGQEEHDVLLSNEEDRKVGKLFEDTKYTTLIAKLKSDGIPMYKRNVMILTNPVAAKKNVSINTVTYEWAPPVQNQALARQYMQMLPKEKQPVAGSEGAQYRKKQLAKQLPAHDQDPSKCHELSPREVKEMEQFVKKYKSEALGVGDVKLPCEMDAQGPKQMNIPGGDRSTPAAVGAMEDKSAEHKRTQYSCYCCKLSMKEGDPAIYAERAGYDKLWHPACFVCSTCHELLVDMIYFWKNEKLYCGRHYCDSEKPRCAGCDELIFSNEYTQAENQNWHLKHFCCFDCDSILAGEIYVMVNDKPVCKPCYVKNHAVVCQGCHNAIDPEVQRVSYNNFSWHASTECFLCSCCSKCLIGQKFMPVEGMVFCSVECKKMMS</sequence>